<reference key="1">
    <citation type="journal article" date="2007" name="PLoS Genet.">
        <title>Meningococcal genetic variation mechanisms viewed through comparative analysis of serogroup C strain FAM18.</title>
        <authorList>
            <person name="Bentley S.D."/>
            <person name="Vernikos G.S."/>
            <person name="Snyder L.A.S."/>
            <person name="Churcher C."/>
            <person name="Arrowsmith C."/>
            <person name="Chillingworth T."/>
            <person name="Cronin A."/>
            <person name="Davis P.H."/>
            <person name="Holroyd N.E."/>
            <person name="Jagels K."/>
            <person name="Maddison M."/>
            <person name="Moule S."/>
            <person name="Rabbinowitsch E."/>
            <person name="Sharp S."/>
            <person name="Unwin L."/>
            <person name="Whitehead S."/>
            <person name="Quail M.A."/>
            <person name="Achtman M."/>
            <person name="Barrell B.G."/>
            <person name="Saunders N.J."/>
            <person name="Parkhill J."/>
        </authorList>
    </citation>
    <scope>NUCLEOTIDE SEQUENCE [LARGE SCALE GENOMIC DNA]</scope>
    <source>
        <strain>ATCC 700532 / DSM 15464 / FAM18</strain>
    </source>
</reference>
<comment type="function">
    <text evidence="1">NDH-1 shuttles electrons from NADH, via FMN and iron-sulfur (Fe-S) centers, to quinones in the respiratory chain. The immediate electron acceptor for the enzyme in this species is believed to be ubiquinone. Couples the redox reaction to proton translocation (for every two electrons transferred, four hydrogen ions are translocated across the cytoplasmic membrane), and thus conserves the redox energy in a proton gradient. This subunit may bind ubiquinone.</text>
</comment>
<comment type="catalytic activity">
    <reaction evidence="1">
        <text>a quinone + NADH + 5 H(+)(in) = a quinol + NAD(+) + 4 H(+)(out)</text>
        <dbReference type="Rhea" id="RHEA:57888"/>
        <dbReference type="ChEBI" id="CHEBI:15378"/>
        <dbReference type="ChEBI" id="CHEBI:24646"/>
        <dbReference type="ChEBI" id="CHEBI:57540"/>
        <dbReference type="ChEBI" id="CHEBI:57945"/>
        <dbReference type="ChEBI" id="CHEBI:132124"/>
    </reaction>
</comment>
<comment type="subunit">
    <text evidence="1">NDH-1 is composed of 14 different subunits. Subunits NuoA, H, J, K, L, M, N constitute the membrane sector of the complex.</text>
</comment>
<comment type="subcellular location">
    <subcellularLocation>
        <location evidence="1">Cell inner membrane</location>
        <topology evidence="1">Multi-pass membrane protein</topology>
    </subcellularLocation>
</comment>
<comment type="similarity">
    <text evidence="1">Belongs to the complex I subunit 1 family.</text>
</comment>
<name>NUOH_NEIMF</name>
<keyword id="KW-0997">Cell inner membrane</keyword>
<keyword id="KW-1003">Cell membrane</keyword>
<keyword id="KW-0472">Membrane</keyword>
<keyword id="KW-0520">NAD</keyword>
<keyword id="KW-0874">Quinone</keyword>
<keyword id="KW-1278">Translocase</keyword>
<keyword id="KW-0812">Transmembrane</keyword>
<keyword id="KW-1133">Transmembrane helix</keyword>
<keyword id="KW-0830">Ubiquinone</keyword>
<organism>
    <name type="scientific">Neisseria meningitidis serogroup C / serotype 2a (strain ATCC 700532 / DSM 15464 / FAM18)</name>
    <dbReference type="NCBI Taxonomy" id="272831"/>
    <lineage>
        <taxon>Bacteria</taxon>
        <taxon>Pseudomonadati</taxon>
        <taxon>Pseudomonadota</taxon>
        <taxon>Betaproteobacteria</taxon>
        <taxon>Neisseriales</taxon>
        <taxon>Neisseriaceae</taxon>
        <taxon>Neisseria</taxon>
    </lineage>
</organism>
<protein>
    <recommendedName>
        <fullName evidence="1">NADH-quinone oxidoreductase subunit H</fullName>
        <ecNumber evidence="1">7.1.1.-</ecNumber>
    </recommendedName>
    <alternativeName>
        <fullName evidence="1">NADH dehydrogenase I subunit H</fullName>
    </alternativeName>
    <alternativeName>
        <fullName evidence="1">NDH-1 subunit H</fullName>
    </alternativeName>
</protein>
<accession>A1KRT0</accession>
<dbReference type="EC" id="7.1.1.-" evidence="1"/>
<dbReference type="EMBL" id="AM421808">
    <property type="protein sequence ID" value="CAM09559.1"/>
    <property type="molecule type" value="Genomic_DNA"/>
</dbReference>
<dbReference type="SMR" id="A1KRT0"/>
<dbReference type="KEGG" id="nmc:NMC0245"/>
<dbReference type="HOGENOM" id="CLU_015134_0_1_4"/>
<dbReference type="Proteomes" id="UP000002286">
    <property type="component" value="Chromosome"/>
</dbReference>
<dbReference type="GO" id="GO:0005886">
    <property type="term" value="C:plasma membrane"/>
    <property type="evidence" value="ECO:0007669"/>
    <property type="project" value="UniProtKB-SubCell"/>
</dbReference>
<dbReference type="GO" id="GO:0003954">
    <property type="term" value="F:NADH dehydrogenase activity"/>
    <property type="evidence" value="ECO:0007669"/>
    <property type="project" value="TreeGrafter"/>
</dbReference>
<dbReference type="GO" id="GO:0016655">
    <property type="term" value="F:oxidoreductase activity, acting on NAD(P)H, quinone or similar compound as acceptor"/>
    <property type="evidence" value="ECO:0007669"/>
    <property type="project" value="UniProtKB-UniRule"/>
</dbReference>
<dbReference type="GO" id="GO:0048038">
    <property type="term" value="F:quinone binding"/>
    <property type="evidence" value="ECO:0007669"/>
    <property type="project" value="UniProtKB-KW"/>
</dbReference>
<dbReference type="GO" id="GO:0009060">
    <property type="term" value="P:aerobic respiration"/>
    <property type="evidence" value="ECO:0007669"/>
    <property type="project" value="TreeGrafter"/>
</dbReference>
<dbReference type="HAMAP" id="MF_01350">
    <property type="entry name" value="NDH1_NuoH"/>
    <property type="match status" value="1"/>
</dbReference>
<dbReference type="InterPro" id="IPR001694">
    <property type="entry name" value="NADH_UbQ_OxRdtase_su1/FPO"/>
</dbReference>
<dbReference type="InterPro" id="IPR018086">
    <property type="entry name" value="NADH_UbQ_OxRdtase_su1_CS"/>
</dbReference>
<dbReference type="NCBIfam" id="NF004741">
    <property type="entry name" value="PRK06076.1-2"/>
    <property type="match status" value="1"/>
</dbReference>
<dbReference type="PANTHER" id="PTHR11432">
    <property type="entry name" value="NADH DEHYDROGENASE SUBUNIT 1"/>
    <property type="match status" value="1"/>
</dbReference>
<dbReference type="PANTHER" id="PTHR11432:SF3">
    <property type="entry name" value="NADH-UBIQUINONE OXIDOREDUCTASE CHAIN 1"/>
    <property type="match status" value="1"/>
</dbReference>
<dbReference type="Pfam" id="PF00146">
    <property type="entry name" value="NADHdh"/>
    <property type="match status" value="1"/>
</dbReference>
<dbReference type="PROSITE" id="PS00668">
    <property type="entry name" value="COMPLEX1_ND1_2"/>
    <property type="match status" value="1"/>
</dbReference>
<feature type="chain" id="PRO_0000298831" description="NADH-quinone oxidoreductase subunit H">
    <location>
        <begin position="1"/>
        <end position="360"/>
    </location>
</feature>
<feature type="transmembrane region" description="Helical" evidence="1">
    <location>
        <begin position="22"/>
        <end position="42"/>
    </location>
</feature>
<feature type="transmembrane region" description="Helical" evidence="1">
    <location>
        <begin position="97"/>
        <end position="117"/>
    </location>
</feature>
<feature type="transmembrane region" description="Helical" evidence="1">
    <location>
        <begin position="130"/>
        <end position="150"/>
    </location>
</feature>
<feature type="transmembrane region" description="Helical" evidence="1">
    <location>
        <begin position="170"/>
        <end position="190"/>
    </location>
</feature>
<feature type="transmembrane region" description="Helical" evidence="1">
    <location>
        <begin position="208"/>
        <end position="228"/>
    </location>
</feature>
<feature type="transmembrane region" description="Helical" evidence="1">
    <location>
        <begin position="255"/>
        <end position="275"/>
    </location>
</feature>
<feature type="transmembrane region" description="Helical" evidence="1">
    <location>
        <begin position="292"/>
        <end position="312"/>
    </location>
</feature>
<feature type="transmembrane region" description="Helical" evidence="1">
    <location>
        <begin position="336"/>
        <end position="356"/>
    </location>
</feature>
<evidence type="ECO:0000255" key="1">
    <source>
        <dbReference type="HAMAP-Rule" id="MF_01350"/>
    </source>
</evidence>
<sequence>MIMQEWFQNLFAATLGLGDLGITVGLVVSVIVKIVIILIPLILTVAYLTYFERKVIGFMQLRVGPNVTGPWGLIQPFADVFKLLFKEVTRPKLSNKALFYIGPIMSLAPSFAAWAVIPFNEEWVLTNINIGLLYILMITSLSVYGVIIAGWASNSKYSFLGAMRASAQSISYEIAMSAALVCVVMVSGSMNFSDIVAAQAKGIAGGSVFSWNWLPLFPIFIVYLISAVAETNRAPFDVAEGESEIVAGHHVEYSGFAFALFFLAEYIFMILIAALTSLMFLGGWLSPFPQSWGFIGTPSAFWMFVKMAAVLYWYLWIRATFPRYRYDQIMRLGWKVLIPIGFAYIVILGVWMISPLNLWK</sequence>
<gene>
    <name evidence="1" type="primary">nuoH</name>
    <name type="ordered locus">NMC0245</name>
</gene>
<proteinExistence type="inferred from homology"/>